<protein>
    <recommendedName>
        <fullName>Uncharacterized protein C1orf202</fullName>
    </recommendedName>
</protein>
<reference key="1">
    <citation type="journal article" date="2006" name="Nature">
        <title>The DNA sequence and biological annotation of human chromosome 1.</title>
        <authorList>
            <person name="Gregory S.G."/>
            <person name="Barlow K.F."/>
            <person name="McLay K.E."/>
            <person name="Kaul R."/>
            <person name="Swarbreck D."/>
            <person name="Dunham A."/>
            <person name="Scott C.E."/>
            <person name="Howe K.L."/>
            <person name="Woodfine K."/>
            <person name="Spencer C.C.A."/>
            <person name="Jones M.C."/>
            <person name="Gillson C."/>
            <person name="Searle S."/>
            <person name="Zhou Y."/>
            <person name="Kokocinski F."/>
            <person name="McDonald L."/>
            <person name="Evans R."/>
            <person name="Phillips K."/>
            <person name="Atkinson A."/>
            <person name="Cooper R."/>
            <person name="Jones C."/>
            <person name="Hall R.E."/>
            <person name="Andrews T.D."/>
            <person name="Lloyd C."/>
            <person name="Ainscough R."/>
            <person name="Almeida J.P."/>
            <person name="Ambrose K.D."/>
            <person name="Anderson F."/>
            <person name="Andrew R.W."/>
            <person name="Ashwell R.I.S."/>
            <person name="Aubin K."/>
            <person name="Babbage A.K."/>
            <person name="Bagguley C.L."/>
            <person name="Bailey J."/>
            <person name="Beasley H."/>
            <person name="Bethel G."/>
            <person name="Bird C.P."/>
            <person name="Bray-Allen S."/>
            <person name="Brown J.Y."/>
            <person name="Brown A.J."/>
            <person name="Buckley D."/>
            <person name="Burton J."/>
            <person name="Bye J."/>
            <person name="Carder C."/>
            <person name="Chapman J.C."/>
            <person name="Clark S.Y."/>
            <person name="Clarke G."/>
            <person name="Clee C."/>
            <person name="Cobley V."/>
            <person name="Collier R.E."/>
            <person name="Corby N."/>
            <person name="Coville G.J."/>
            <person name="Davies J."/>
            <person name="Deadman R."/>
            <person name="Dunn M."/>
            <person name="Earthrowl M."/>
            <person name="Ellington A.G."/>
            <person name="Errington H."/>
            <person name="Frankish A."/>
            <person name="Frankland J."/>
            <person name="French L."/>
            <person name="Garner P."/>
            <person name="Garnett J."/>
            <person name="Gay L."/>
            <person name="Ghori M.R.J."/>
            <person name="Gibson R."/>
            <person name="Gilby L.M."/>
            <person name="Gillett W."/>
            <person name="Glithero R.J."/>
            <person name="Grafham D.V."/>
            <person name="Griffiths C."/>
            <person name="Griffiths-Jones S."/>
            <person name="Grocock R."/>
            <person name="Hammond S."/>
            <person name="Harrison E.S.I."/>
            <person name="Hart E."/>
            <person name="Haugen E."/>
            <person name="Heath P.D."/>
            <person name="Holmes S."/>
            <person name="Holt K."/>
            <person name="Howden P.J."/>
            <person name="Hunt A.R."/>
            <person name="Hunt S.E."/>
            <person name="Hunter G."/>
            <person name="Isherwood J."/>
            <person name="James R."/>
            <person name="Johnson C."/>
            <person name="Johnson D."/>
            <person name="Joy A."/>
            <person name="Kay M."/>
            <person name="Kershaw J.K."/>
            <person name="Kibukawa M."/>
            <person name="Kimberley A.M."/>
            <person name="King A."/>
            <person name="Knights A.J."/>
            <person name="Lad H."/>
            <person name="Laird G."/>
            <person name="Lawlor S."/>
            <person name="Leongamornlert D.A."/>
            <person name="Lloyd D.M."/>
            <person name="Loveland J."/>
            <person name="Lovell J."/>
            <person name="Lush M.J."/>
            <person name="Lyne R."/>
            <person name="Martin S."/>
            <person name="Mashreghi-Mohammadi M."/>
            <person name="Matthews L."/>
            <person name="Matthews N.S.W."/>
            <person name="McLaren S."/>
            <person name="Milne S."/>
            <person name="Mistry S."/>
            <person name="Moore M.J.F."/>
            <person name="Nickerson T."/>
            <person name="O'Dell C.N."/>
            <person name="Oliver K."/>
            <person name="Palmeiri A."/>
            <person name="Palmer S.A."/>
            <person name="Parker A."/>
            <person name="Patel D."/>
            <person name="Pearce A.V."/>
            <person name="Peck A.I."/>
            <person name="Pelan S."/>
            <person name="Phelps K."/>
            <person name="Phillimore B.J."/>
            <person name="Plumb R."/>
            <person name="Rajan J."/>
            <person name="Raymond C."/>
            <person name="Rouse G."/>
            <person name="Saenphimmachak C."/>
            <person name="Sehra H.K."/>
            <person name="Sheridan E."/>
            <person name="Shownkeen R."/>
            <person name="Sims S."/>
            <person name="Skuce C.D."/>
            <person name="Smith M."/>
            <person name="Steward C."/>
            <person name="Subramanian S."/>
            <person name="Sycamore N."/>
            <person name="Tracey A."/>
            <person name="Tromans A."/>
            <person name="Van Helmond Z."/>
            <person name="Wall M."/>
            <person name="Wallis J.M."/>
            <person name="White S."/>
            <person name="Whitehead S.L."/>
            <person name="Wilkinson J.E."/>
            <person name="Willey D.L."/>
            <person name="Williams H."/>
            <person name="Wilming L."/>
            <person name="Wray P.W."/>
            <person name="Wu Z."/>
            <person name="Coulson A."/>
            <person name="Vaudin M."/>
            <person name="Sulston J.E."/>
            <person name="Durbin R.M."/>
            <person name="Hubbard T."/>
            <person name="Wooster R."/>
            <person name="Dunham I."/>
            <person name="Carter N.P."/>
            <person name="McVean G."/>
            <person name="Ross M.T."/>
            <person name="Harrow J."/>
            <person name="Olson M.V."/>
            <person name="Beck S."/>
            <person name="Rogers J."/>
            <person name="Bentley D.R."/>
        </authorList>
    </citation>
    <scope>NUCLEOTIDE SEQUENCE [LARGE SCALE GENOMIC DNA]</scope>
</reference>
<name>CA202_HUMAN</name>
<proteinExistence type="evidence at protein level"/>
<dbReference type="EMBL" id="AL451007">
    <property type="status" value="NOT_ANNOTATED_CDS"/>
    <property type="molecule type" value="Genomic_DNA"/>
</dbReference>
<dbReference type="CCDS" id="CCDS91189.1"/>
<dbReference type="RefSeq" id="NP_001382888.1">
    <property type="nucleotide sequence ID" value="NM_001395959.1"/>
</dbReference>
<dbReference type="SMR" id="A0A1W2PPE3"/>
<dbReference type="BioMuta" id="ENSG00000284188"/>
<dbReference type="MassIVE" id="A0A1W2PPE3"/>
<dbReference type="PeptideAtlas" id="A0A1W2PPE3"/>
<dbReference type="Ensembl" id="ENST00000640271.3">
    <property type="protein sequence ID" value="ENSP00000491285.1"/>
    <property type="gene ID" value="ENSG00000284188.3"/>
</dbReference>
<dbReference type="GeneID" id="122455338"/>
<dbReference type="MANE-Select" id="ENST00000640271.3">
    <property type="protein sequence ID" value="ENSP00000491285.1"/>
    <property type="RefSeq nucleotide sequence ID" value="NM_001395959.1"/>
    <property type="RefSeq protein sequence ID" value="NP_001382888.1"/>
</dbReference>
<dbReference type="AGR" id="HGNC:56760"/>
<dbReference type="GeneCards" id="C1orf202"/>
<dbReference type="HGNC" id="HGNC:56760">
    <property type="gene designation" value="C1orf202"/>
</dbReference>
<dbReference type="VEuPathDB" id="HostDB:ENSG00000284188"/>
<dbReference type="GeneTree" id="ENSGT00910000147125"/>
<dbReference type="InParanoid" id="A0A1W2PPE3"/>
<dbReference type="OMA" id="CWCWRRL"/>
<dbReference type="OrthoDB" id="9634452at2759"/>
<dbReference type="PAN-GO" id="A0A1W2PPE3">
    <property type="GO annotations" value="0 GO annotations based on evolutionary models"/>
</dbReference>
<dbReference type="PRO" id="PR:A0A1W2PPE3"/>
<dbReference type="Proteomes" id="UP000005640">
    <property type="component" value="Chromosome 1"/>
</dbReference>
<dbReference type="RNAct" id="A0A1W2PPE3">
    <property type="molecule type" value="protein"/>
</dbReference>
<dbReference type="Bgee" id="ENSG00000284188">
    <property type="expression patterns" value="Expressed in right testis and 29 other cell types or tissues"/>
</dbReference>
<keyword id="KW-1267">Proteomics identification</keyword>
<keyword id="KW-1185">Reference proteome</keyword>
<sequence length="182" mass="20278">MAAPRFGGPRRGGAQHELLEKAARLERGPPPRGDPEAVGRRAVAGDGGSCSGCWCWRRLFRGPRRKKLRQAHARAGKEAPERGLWGPSSLQRLLQRLATWRRRYLRRKERPDRLEEIPLLVLDRAQGGHEAAAGPQSSVPGRPAQAAPARQPRRRSATRSRSPVAPPVHAQDCFFLFGQQKQ</sequence>
<organism>
    <name type="scientific">Homo sapiens</name>
    <name type="common">Human</name>
    <dbReference type="NCBI Taxonomy" id="9606"/>
    <lineage>
        <taxon>Eukaryota</taxon>
        <taxon>Metazoa</taxon>
        <taxon>Chordata</taxon>
        <taxon>Craniata</taxon>
        <taxon>Vertebrata</taxon>
        <taxon>Euteleostomi</taxon>
        <taxon>Mammalia</taxon>
        <taxon>Eutheria</taxon>
        <taxon>Euarchontoglires</taxon>
        <taxon>Primates</taxon>
        <taxon>Haplorrhini</taxon>
        <taxon>Catarrhini</taxon>
        <taxon>Hominidae</taxon>
        <taxon>Homo</taxon>
    </lineage>
</organism>
<accession>A0A1W2PPE3</accession>
<evidence type="ECO:0000256" key="1">
    <source>
        <dbReference type="SAM" id="MobiDB-lite"/>
    </source>
</evidence>
<evidence type="ECO:0000312" key="2">
    <source>
        <dbReference type="HGNC" id="HGNC:56760"/>
    </source>
</evidence>
<feature type="chain" id="PRO_0000458416" description="Uncharacterized protein C1orf202">
    <location>
        <begin position="1"/>
        <end position="182"/>
    </location>
</feature>
<feature type="region of interest" description="Disordered" evidence="1">
    <location>
        <begin position="1"/>
        <end position="49"/>
    </location>
</feature>
<feature type="region of interest" description="Disordered" evidence="1">
    <location>
        <begin position="126"/>
        <end position="171"/>
    </location>
</feature>
<feature type="compositionally biased region" description="Basic and acidic residues" evidence="1">
    <location>
        <begin position="17"/>
        <end position="39"/>
    </location>
</feature>
<gene>
    <name evidence="2" type="primary">C1orf202</name>
</gene>